<organism>
    <name type="scientific">Clostridium botulinum (strain Hall / ATCC 3502 / NCTC 13319 / Type A)</name>
    <dbReference type="NCBI Taxonomy" id="441771"/>
    <lineage>
        <taxon>Bacteria</taxon>
        <taxon>Bacillati</taxon>
        <taxon>Bacillota</taxon>
        <taxon>Clostridia</taxon>
        <taxon>Eubacteriales</taxon>
        <taxon>Clostridiaceae</taxon>
        <taxon>Clostridium</taxon>
    </lineage>
</organism>
<sequence length="340" mass="36579">MKESINILAIESSCDETSAAVVVNGREVLSNIIASQISTHEKFGGVVPEVASRKHIEVISAVVQEALDEANFTLDDIDAIGVTYGPGLVGALLVGLQYAKGLAFATGKPLIGVNHIEGHISANFIEYKDLKPPFMCLVVSGGHTFIVYMKDYGEFEVLGETRDDAAGEAFDKVARAIGLGYPGGPKIDKISKEGNEEAIKFPRANFHNDTLDFSFSGIKSAVLNYLNKKEMKGEEINKADVAASFQKSVVDVLVDNTIKACMSKKVDKIAVAGGVASNSCLRETLVRECKKKGIEVLIPPFILCTDNAAMIGSAAYFEYIKGRRTSLDINAVPNLKLGER</sequence>
<keyword id="KW-0012">Acyltransferase</keyword>
<keyword id="KW-0963">Cytoplasm</keyword>
<keyword id="KW-0408">Iron</keyword>
<keyword id="KW-0479">Metal-binding</keyword>
<keyword id="KW-1185">Reference proteome</keyword>
<keyword id="KW-0808">Transferase</keyword>
<keyword id="KW-0819">tRNA processing</keyword>
<comment type="function">
    <text evidence="1">Required for the formation of a threonylcarbamoyl group on adenosine at position 37 (t(6)A37) in tRNAs that read codons beginning with adenine. Is involved in the transfer of the threonylcarbamoyl moiety of threonylcarbamoyl-AMP (TC-AMP) to the N6 group of A37, together with TsaE and TsaB. TsaD likely plays a direct catalytic role in this reaction.</text>
</comment>
<comment type="catalytic activity">
    <reaction evidence="1">
        <text>L-threonylcarbamoyladenylate + adenosine(37) in tRNA = N(6)-L-threonylcarbamoyladenosine(37) in tRNA + AMP + H(+)</text>
        <dbReference type="Rhea" id="RHEA:37059"/>
        <dbReference type="Rhea" id="RHEA-COMP:10162"/>
        <dbReference type="Rhea" id="RHEA-COMP:10163"/>
        <dbReference type="ChEBI" id="CHEBI:15378"/>
        <dbReference type="ChEBI" id="CHEBI:73682"/>
        <dbReference type="ChEBI" id="CHEBI:74411"/>
        <dbReference type="ChEBI" id="CHEBI:74418"/>
        <dbReference type="ChEBI" id="CHEBI:456215"/>
        <dbReference type="EC" id="2.3.1.234"/>
    </reaction>
</comment>
<comment type="cofactor">
    <cofactor evidence="1">
        <name>Fe(2+)</name>
        <dbReference type="ChEBI" id="CHEBI:29033"/>
    </cofactor>
    <text evidence="1">Binds 1 Fe(2+) ion per subunit.</text>
</comment>
<comment type="subcellular location">
    <subcellularLocation>
        <location evidence="1">Cytoplasm</location>
    </subcellularLocation>
</comment>
<comment type="similarity">
    <text evidence="1">Belongs to the KAE1 / TsaD family.</text>
</comment>
<gene>
    <name evidence="1" type="primary">tsaD</name>
    <name type="synonym">gcp</name>
    <name type="ordered locus">CBO3313</name>
    <name type="ordered locus">CLC_3255</name>
</gene>
<accession>A5I738</accession>
<accession>A7G8C2</accession>
<feature type="chain" id="PRO_1000024431" description="tRNA N6-adenosine threonylcarbamoyltransferase">
    <location>
        <begin position="1"/>
        <end position="340"/>
    </location>
</feature>
<feature type="binding site" evidence="1">
    <location>
        <position position="115"/>
    </location>
    <ligand>
        <name>Fe cation</name>
        <dbReference type="ChEBI" id="CHEBI:24875"/>
    </ligand>
</feature>
<feature type="binding site" evidence="1">
    <location>
        <position position="119"/>
    </location>
    <ligand>
        <name>Fe cation</name>
        <dbReference type="ChEBI" id="CHEBI:24875"/>
    </ligand>
</feature>
<feature type="binding site" evidence="1">
    <location>
        <begin position="138"/>
        <end position="142"/>
    </location>
    <ligand>
        <name>substrate</name>
    </ligand>
</feature>
<feature type="binding site" evidence="1">
    <location>
        <position position="171"/>
    </location>
    <ligand>
        <name>substrate</name>
    </ligand>
</feature>
<feature type="binding site" evidence="1">
    <location>
        <position position="184"/>
    </location>
    <ligand>
        <name>substrate</name>
    </ligand>
</feature>
<feature type="binding site" evidence="1">
    <location>
        <position position="188"/>
    </location>
    <ligand>
        <name>substrate</name>
    </ligand>
</feature>
<feature type="binding site" evidence="1">
    <location>
        <position position="278"/>
    </location>
    <ligand>
        <name>substrate</name>
    </ligand>
</feature>
<feature type="binding site" evidence="1">
    <location>
        <position position="306"/>
    </location>
    <ligand>
        <name>Fe cation</name>
        <dbReference type="ChEBI" id="CHEBI:24875"/>
    </ligand>
</feature>
<name>TSAD_CLOBH</name>
<protein>
    <recommendedName>
        <fullName evidence="1">tRNA N6-adenosine threonylcarbamoyltransferase</fullName>
        <ecNumber evidence="1">2.3.1.234</ecNumber>
    </recommendedName>
    <alternativeName>
        <fullName evidence="1">N6-L-threonylcarbamoyladenine synthase</fullName>
        <shortName evidence="1">t(6)A synthase</shortName>
    </alternativeName>
    <alternativeName>
        <fullName evidence="1">t(6)A37 threonylcarbamoyladenosine biosynthesis protein TsaD</fullName>
    </alternativeName>
    <alternativeName>
        <fullName evidence="1">tRNA threonylcarbamoyladenosine biosynthesis protein TsaD</fullName>
    </alternativeName>
</protein>
<reference key="1">
    <citation type="journal article" date="2007" name="Genome Res.">
        <title>Genome sequence of a proteolytic (Group I) Clostridium botulinum strain Hall A and comparative analysis of the clostridial genomes.</title>
        <authorList>
            <person name="Sebaihia M."/>
            <person name="Peck M.W."/>
            <person name="Minton N.P."/>
            <person name="Thomson N.R."/>
            <person name="Holden M.T.G."/>
            <person name="Mitchell W.J."/>
            <person name="Carter A.T."/>
            <person name="Bentley S.D."/>
            <person name="Mason D.R."/>
            <person name="Crossman L."/>
            <person name="Paul C.J."/>
            <person name="Ivens A."/>
            <person name="Wells-Bennik M.H.J."/>
            <person name="Davis I.J."/>
            <person name="Cerdeno-Tarraga A.M."/>
            <person name="Churcher C."/>
            <person name="Quail M.A."/>
            <person name="Chillingworth T."/>
            <person name="Feltwell T."/>
            <person name="Fraser A."/>
            <person name="Goodhead I."/>
            <person name="Hance Z."/>
            <person name="Jagels K."/>
            <person name="Larke N."/>
            <person name="Maddison M."/>
            <person name="Moule S."/>
            <person name="Mungall K."/>
            <person name="Norbertczak H."/>
            <person name="Rabbinowitsch E."/>
            <person name="Sanders M."/>
            <person name="Simmonds M."/>
            <person name="White B."/>
            <person name="Whithead S."/>
            <person name="Parkhill J."/>
        </authorList>
    </citation>
    <scope>NUCLEOTIDE SEQUENCE [LARGE SCALE GENOMIC DNA]</scope>
    <source>
        <strain>Hall / ATCC 3502 / NCTC 13319 / Type A</strain>
    </source>
</reference>
<reference key="2">
    <citation type="journal article" date="2007" name="PLoS ONE">
        <title>Analysis of the neurotoxin complex genes in Clostridium botulinum A1-A4 and B1 strains: BoNT/A3, /Ba4 and /B1 clusters are located within plasmids.</title>
        <authorList>
            <person name="Smith T.J."/>
            <person name="Hill K.K."/>
            <person name="Foley B.T."/>
            <person name="Detter J.C."/>
            <person name="Munk A.C."/>
            <person name="Bruce D.C."/>
            <person name="Doggett N.A."/>
            <person name="Smith L.A."/>
            <person name="Marks J.D."/>
            <person name="Xie G."/>
            <person name="Brettin T.S."/>
        </authorList>
    </citation>
    <scope>NUCLEOTIDE SEQUENCE [LARGE SCALE GENOMIC DNA]</scope>
    <source>
        <strain>Hall / ATCC 3502 / NCTC 13319 / Type A</strain>
    </source>
</reference>
<dbReference type="EC" id="2.3.1.234" evidence="1"/>
<dbReference type="EMBL" id="CP000727">
    <property type="protein sequence ID" value="ABS38671.1"/>
    <property type="molecule type" value="Genomic_DNA"/>
</dbReference>
<dbReference type="EMBL" id="AM412317">
    <property type="protein sequence ID" value="CAL84871.1"/>
    <property type="molecule type" value="Genomic_DNA"/>
</dbReference>
<dbReference type="RefSeq" id="WP_003357496.1">
    <property type="nucleotide sequence ID" value="NC_009698.1"/>
</dbReference>
<dbReference type="RefSeq" id="YP_001255797.1">
    <property type="nucleotide sequence ID" value="NC_009495.1"/>
</dbReference>
<dbReference type="RefSeq" id="YP_001389037.1">
    <property type="nucleotide sequence ID" value="NC_009698.1"/>
</dbReference>
<dbReference type="SMR" id="A5I738"/>
<dbReference type="GeneID" id="5184329"/>
<dbReference type="KEGG" id="cbh:CLC_3255"/>
<dbReference type="KEGG" id="cbo:CBO3313"/>
<dbReference type="PATRIC" id="fig|413999.7.peg.3289"/>
<dbReference type="HOGENOM" id="CLU_023208_0_2_9"/>
<dbReference type="PRO" id="PR:A5I738"/>
<dbReference type="Proteomes" id="UP000001986">
    <property type="component" value="Chromosome"/>
</dbReference>
<dbReference type="GO" id="GO:0005737">
    <property type="term" value="C:cytoplasm"/>
    <property type="evidence" value="ECO:0007669"/>
    <property type="project" value="UniProtKB-SubCell"/>
</dbReference>
<dbReference type="GO" id="GO:0005506">
    <property type="term" value="F:iron ion binding"/>
    <property type="evidence" value="ECO:0007669"/>
    <property type="project" value="UniProtKB-UniRule"/>
</dbReference>
<dbReference type="GO" id="GO:0061711">
    <property type="term" value="F:N(6)-L-threonylcarbamoyladenine synthase activity"/>
    <property type="evidence" value="ECO:0007669"/>
    <property type="project" value="UniProtKB-EC"/>
</dbReference>
<dbReference type="GO" id="GO:0002949">
    <property type="term" value="P:tRNA threonylcarbamoyladenosine modification"/>
    <property type="evidence" value="ECO:0007669"/>
    <property type="project" value="UniProtKB-UniRule"/>
</dbReference>
<dbReference type="CDD" id="cd24133">
    <property type="entry name" value="ASKHA_NBD_TsaD_bac"/>
    <property type="match status" value="1"/>
</dbReference>
<dbReference type="FunFam" id="3.30.420.40:FF:000012">
    <property type="entry name" value="tRNA N6-adenosine threonylcarbamoyltransferase"/>
    <property type="match status" value="1"/>
</dbReference>
<dbReference type="FunFam" id="3.30.420.40:FF:000040">
    <property type="entry name" value="tRNA N6-adenosine threonylcarbamoyltransferase"/>
    <property type="match status" value="1"/>
</dbReference>
<dbReference type="Gene3D" id="3.30.420.40">
    <property type="match status" value="2"/>
</dbReference>
<dbReference type="HAMAP" id="MF_01445">
    <property type="entry name" value="TsaD"/>
    <property type="match status" value="1"/>
</dbReference>
<dbReference type="InterPro" id="IPR043129">
    <property type="entry name" value="ATPase_NBD"/>
</dbReference>
<dbReference type="InterPro" id="IPR000905">
    <property type="entry name" value="Gcp-like_dom"/>
</dbReference>
<dbReference type="InterPro" id="IPR017861">
    <property type="entry name" value="KAE1/TsaD"/>
</dbReference>
<dbReference type="InterPro" id="IPR022450">
    <property type="entry name" value="TsaD"/>
</dbReference>
<dbReference type="NCBIfam" id="TIGR00329">
    <property type="entry name" value="gcp_kae1"/>
    <property type="match status" value="1"/>
</dbReference>
<dbReference type="NCBIfam" id="TIGR03723">
    <property type="entry name" value="T6A_TsaD_YgjD"/>
    <property type="match status" value="1"/>
</dbReference>
<dbReference type="PANTHER" id="PTHR11735">
    <property type="entry name" value="TRNA N6-ADENOSINE THREONYLCARBAMOYLTRANSFERASE"/>
    <property type="match status" value="1"/>
</dbReference>
<dbReference type="PANTHER" id="PTHR11735:SF6">
    <property type="entry name" value="TRNA N6-ADENOSINE THREONYLCARBAMOYLTRANSFERASE, MITOCHONDRIAL"/>
    <property type="match status" value="1"/>
</dbReference>
<dbReference type="Pfam" id="PF00814">
    <property type="entry name" value="TsaD"/>
    <property type="match status" value="1"/>
</dbReference>
<dbReference type="PRINTS" id="PR00789">
    <property type="entry name" value="OSIALOPTASE"/>
</dbReference>
<dbReference type="SUPFAM" id="SSF53067">
    <property type="entry name" value="Actin-like ATPase domain"/>
    <property type="match status" value="2"/>
</dbReference>
<proteinExistence type="inferred from homology"/>
<evidence type="ECO:0000255" key="1">
    <source>
        <dbReference type="HAMAP-Rule" id="MF_01445"/>
    </source>
</evidence>